<dbReference type="EC" id="7.5.2.11" evidence="1"/>
<dbReference type="EC" id="7.5.2.7" evidence="1"/>
<dbReference type="EMBL" id="AE007869">
    <property type="protein sequence ID" value="AAK88532.2"/>
    <property type="molecule type" value="Genomic_DNA"/>
</dbReference>
<dbReference type="PIR" id="AB2923">
    <property type="entry name" value="AB2923"/>
</dbReference>
<dbReference type="PIR" id="C97697">
    <property type="entry name" value="C97697"/>
</dbReference>
<dbReference type="RefSeq" id="NP_355747.2">
    <property type="nucleotide sequence ID" value="NC_003062.2"/>
</dbReference>
<dbReference type="SMR" id="Q8UBN2"/>
<dbReference type="STRING" id="176299.Atu2819"/>
<dbReference type="EnsemblBacteria" id="AAK88532">
    <property type="protein sequence ID" value="AAK88532"/>
    <property type="gene ID" value="Atu2819"/>
</dbReference>
<dbReference type="KEGG" id="atu:Atu2819"/>
<dbReference type="PATRIC" id="fig|176299.10.peg.2829"/>
<dbReference type="eggNOG" id="COG1129">
    <property type="taxonomic scope" value="Bacteria"/>
</dbReference>
<dbReference type="HOGENOM" id="CLU_000604_92_3_5"/>
<dbReference type="OrthoDB" id="9805029at2"/>
<dbReference type="PhylomeDB" id="Q8UBN2"/>
<dbReference type="BioCyc" id="AGRO:ATU2819-MONOMER"/>
<dbReference type="Proteomes" id="UP000000813">
    <property type="component" value="Chromosome circular"/>
</dbReference>
<dbReference type="GO" id="GO:0005886">
    <property type="term" value="C:plasma membrane"/>
    <property type="evidence" value="ECO:0007669"/>
    <property type="project" value="UniProtKB-SubCell"/>
</dbReference>
<dbReference type="GO" id="GO:0015611">
    <property type="term" value="F:ABC-type D-ribose transporter activity"/>
    <property type="evidence" value="ECO:0007669"/>
    <property type="project" value="UniProtKB-EC"/>
</dbReference>
<dbReference type="GO" id="GO:0005524">
    <property type="term" value="F:ATP binding"/>
    <property type="evidence" value="ECO:0007669"/>
    <property type="project" value="UniProtKB-KW"/>
</dbReference>
<dbReference type="GO" id="GO:0016887">
    <property type="term" value="F:ATP hydrolysis activity"/>
    <property type="evidence" value="ECO:0007669"/>
    <property type="project" value="InterPro"/>
</dbReference>
<dbReference type="CDD" id="cd03216">
    <property type="entry name" value="ABC_Carb_Monos_I"/>
    <property type="match status" value="1"/>
</dbReference>
<dbReference type="CDD" id="cd03215">
    <property type="entry name" value="ABC_Carb_Monos_II"/>
    <property type="match status" value="1"/>
</dbReference>
<dbReference type="FunFam" id="3.40.50.300:FF:000126">
    <property type="entry name" value="Galactose/methyl galactoside import ATP-binding protein MglA"/>
    <property type="match status" value="1"/>
</dbReference>
<dbReference type="FunFam" id="3.40.50.300:FF:000127">
    <property type="entry name" value="Ribose import ATP-binding protein RbsA"/>
    <property type="match status" value="1"/>
</dbReference>
<dbReference type="Gene3D" id="3.40.50.300">
    <property type="entry name" value="P-loop containing nucleotide triphosphate hydrolases"/>
    <property type="match status" value="2"/>
</dbReference>
<dbReference type="InterPro" id="IPR003593">
    <property type="entry name" value="AAA+_ATPase"/>
</dbReference>
<dbReference type="InterPro" id="IPR050107">
    <property type="entry name" value="ABC_carbohydrate_import_ATPase"/>
</dbReference>
<dbReference type="InterPro" id="IPR003439">
    <property type="entry name" value="ABC_transporter-like_ATP-bd"/>
</dbReference>
<dbReference type="InterPro" id="IPR017871">
    <property type="entry name" value="ABC_transporter-like_CS"/>
</dbReference>
<dbReference type="InterPro" id="IPR027417">
    <property type="entry name" value="P-loop_NTPase"/>
</dbReference>
<dbReference type="PANTHER" id="PTHR43790">
    <property type="entry name" value="CARBOHYDRATE TRANSPORT ATP-BINDING PROTEIN MG119-RELATED"/>
    <property type="match status" value="1"/>
</dbReference>
<dbReference type="PANTHER" id="PTHR43790:SF9">
    <property type="entry name" value="GALACTOFURANOSE TRANSPORTER ATP-BINDING PROTEIN YTFR"/>
    <property type="match status" value="1"/>
</dbReference>
<dbReference type="Pfam" id="PF00005">
    <property type="entry name" value="ABC_tran"/>
    <property type="match status" value="2"/>
</dbReference>
<dbReference type="SMART" id="SM00382">
    <property type="entry name" value="AAA"/>
    <property type="match status" value="2"/>
</dbReference>
<dbReference type="SUPFAM" id="SSF52540">
    <property type="entry name" value="P-loop containing nucleoside triphosphate hydrolases"/>
    <property type="match status" value="2"/>
</dbReference>
<dbReference type="PROSITE" id="PS00211">
    <property type="entry name" value="ABC_TRANSPORTER_1"/>
    <property type="match status" value="1"/>
</dbReference>
<dbReference type="PROSITE" id="PS50893">
    <property type="entry name" value="ABC_TRANSPORTER_2"/>
    <property type="match status" value="2"/>
</dbReference>
<dbReference type="PROSITE" id="PS51260">
    <property type="entry name" value="MGLA"/>
    <property type="match status" value="1"/>
</dbReference>
<dbReference type="PROSITE" id="PS51254">
    <property type="entry name" value="RBSA"/>
    <property type="match status" value="1"/>
</dbReference>
<accession>Q8UBN2</accession>
<accession>Q7CW65</accession>
<name>RGMG1_AGRFC</name>
<organism>
    <name type="scientific">Agrobacterium fabrum (strain C58 / ATCC 33970)</name>
    <name type="common">Agrobacterium tumefaciens (strain C58)</name>
    <dbReference type="NCBI Taxonomy" id="176299"/>
    <lineage>
        <taxon>Bacteria</taxon>
        <taxon>Pseudomonadati</taxon>
        <taxon>Pseudomonadota</taxon>
        <taxon>Alphaproteobacteria</taxon>
        <taxon>Hyphomicrobiales</taxon>
        <taxon>Rhizobiaceae</taxon>
        <taxon>Rhizobium/Agrobacterium group</taxon>
        <taxon>Agrobacterium</taxon>
        <taxon>Agrobacterium tumefaciens complex</taxon>
    </lineage>
</organism>
<sequence>MARAERSVLLRLENISKEFPGVKALSNVHFDLRSGEVHAVCGENGAGKSTLMKIISGVYQPSEGTILHKGEKVQYASPLQSEAAGIAIIHQELNLVPHLSVAENIYLAREPRRGFLVDRKKLRLDAKRCLDRLGVDINPDQLVRSLSVAQCQMVEIAKALSLDAEVLIMDEPTSSLTEQETRLLFKVIRDLKASGVGIVYISHRLDEMAEIVDRVTILRDGRYISTDDFASITVDDIVTRMVGRSLEDKFPERTSRPTDDILFSVEGLTRNGVFSDVSFSLRRGEILGFAGLMGAGRTEVARAIFGADPLDAGKIVFNGRELSIGSPQDAIEEGIAYLSEDRKSDGLAIKMSVAANTTLANLGEVSNRFGLIDFKKHDDVAKRYVDLLNIRTPSIDQTVRLLSGGNQQKIIIGKWLFRQSRVLFFDEPTRGIDVGAKFAIYKIMDELAAQGIGVILISSELPEILGLTDRIAVFHQGRITGVLETAKTNQEEIMRYASGYGRAAQ</sequence>
<evidence type="ECO:0000255" key="1">
    <source>
        <dbReference type="HAMAP-Rule" id="MF_01717"/>
    </source>
</evidence>
<gene>
    <name type="ordered locus">Atu2819</name>
    <name type="ORF">AGR_C_5112</name>
</gene>
<keyword id="KW-0067">ATP-binding</keyword>
<keyword id="KW-0997">Cell inner membrane</keyword>
<keyword id="KW-1003">Cell membrane</keyword>
<keyword id="KW-0472">Membrane</keyword>
<keyword id="KW-0547">Nucleotide-binding</keyword>
<keyword id="KW-1185">Reference proteome</keyword>
<keyword id="KW-0677">Repeat</keyword>
<keyword id="KW-0762">Sugar transport</keyword>
<keyword id="KW-1278">Translocase</keyword>
<keyword id="KW-0813">Transport</keyword>
<feature type="chain" id="PRO_0000262970" description="Putative ribose/galactose/methyl galactoside import ATP-binding protein 1">
    <location>
        <begin position="1"/>
        <end position="505"/>
    </location>
</feature>
<feature type="domain" description="ABC transporter 1" evidence="1">
    <location>
        <begin position="10"/>
        <end position="245"/>
    </location>
</feature>
<feature type="domain" description="ABC transporter 2" evidence="1">
    <location>
        <begin position="256"/>
        <end position="501"/>
    </location>
</feature>
<feature type="binding site" evidence="1">
    <location>
        <begin position="42"/>
        <end position="49"/>
    </location>
    <ligand>
        <name>ATP</name>
        <dbReference type="ChEBI" id="CHEBI:30616"/>
    </ligand>
</feature>
<protein>
    <recommendedName>
        <fullName evidence="1">Putative ribose/galactose/methyl galactoside import ATP-binding protein 1</fullName>
        <ecNumber evidence="1">7.5.2.11</ecNumber>
        <ecNumber evidence="1">7.5.2.7</ecNumber>
    </recommendedName>
</protein>
<proteinExistence type="inferred from homology"/>
<reference key="1">
    <citation type="journal article" date="2001" name="Science">
        <title>The genome of the natural genetic engineer Agrobacterium tumefaciens C58.</title>
        <authorList>
            <person name="Wood D.W."/>
            <person name="Setubal J.C."/>
            <person name="Kaul R."/>
            <person name="Monks D.E."/>
            <person name="Kitajima J.P."/>
            <person name="Okura V.K."/>
            <person name="Zhou Y."/>
            <person name="Chen L."/>
            <person name="Wood G.E."/>
            <person name="Almeida N.F. Jr."/>
            <person name="Woo L."/>
            <person name="Chen Y."/>
            <person name="Paulsen I.T."/>
            <person name="Eisen J.A."/>
            <person name="Karp P.D."/>
            <person name="Bovee D. Sr."/>
            <person name="Chapman P."/>
            <person name="Clendenning J."/>
            <person name="Deatherage G."/>
            <person name="Gillet W."/>
            <person name="Grant C."/>
            <person name="Kutyavin T."/>
            <person name="Levy R."/>
            <person name="Li M.-J."/>
            <person name="McClelland E."/>
            <person name="Palmieri A."/>
            <person name="Raymond C."/>
            <person name="Rouse G."/>
            <person name="Saenphimmachak C."/>
            <person name="Wu Z."/>
            <person name="Romero P."/>
            <person name="Gordon D."/>
            <person name="Zhang S."/>
            <person name="Yoo H."/>
            <person name="Tao Y."/>
            <person name="Biddle P."/>
            <person name="Jung M."/>
            <person name="Krespan W."/>
            <person name="Perry M."/>
            <person name="Gordon-Kamm B."/>
            <person name="Liao L."/>
            <person name="Kim S."/>
            <person name="Hendrick C."/>
            <person name="Zhao Z.-Y."/>
            <person name="Dolan M."/>
            <person name="Chumley F."/>
            <person name="Tingey S.V."/>
            <person name="Tomb J.-F."/>
            <person name="Gordon M.P."/>
            <person name="Olson M.V."/>
            <person name="Nester E.W."/>
        </authorList>
    </citation>
    <scope>NUCLEOTIDE SEQUENCE [LARGE SCALE GENOMIC DNA]</scope>
    <source>
        <strain>C58 / ATCC 33970</strain>
    </source>
</reference>
<reference key="2">
    <citation type="journal article" date="2001" name="Science">
        <title>Genome sequence of the plant pathogen and biotechnology agent Agrobacterium tumefaciens C58.</title>
        <authorList>
            <person name="Goodner B."/>
            <person name="Hinkle G."/>
            <person name="Gattung S."/>
            <person name="Miller N."/>
            <person name="Blanchard M."/>
            <person name="Qurollo B."/>
            <person name="Goldman B.S."/>
            <person name="Cao Y."/>
            <person name="Askenazi M."/>
            <person name="Halling C."/>
            <person name="Mullin L."/>
            <person name="Houmiel K."/>
            <person name="Gordon J."/>
            <person name="Vaudin M."/>
            <person name="Iartchouk O."/>
            <person name="Epp A."/>
            <person name="Liu F."/>
            <person name="Wollam C."/>
            <person name="Allinger M."/>
            <person name="Doughty D."/>
            <person name="Scott C."/>
            <person name="Lappas C."/>
            <person name="Markelz B."/>
            <person name="Flanagan C."/>
            <person name="Crowell C."/>
            <person name="Gurson J."/>
            <person name="Lomo C."/>
            <person name="Sear C."/>
            <person name="Strub G."/>
            <person name="Cielo C."/>
            <person name="Slater S."/>
        </authorList>
    </citation>
    <scope>NUCLEOTIDE SEQUENCE [LARGE SCALE GENOMIC DNA]</scope>
    <source>
        <strain>C58 / ATCC 33970</strain>
    </source>
</reference>
<comment type="function">
    <text evidence="1">Part of an ABC transporter complex involved in carbohydrate import. Could be involved in ribose, galactose and/or methyl galactoside import. Responsible for energy coupling to the transport system.</text>
</comment>
<comment type="catalytic activity">
    <reaction evidence="1">
        <text>D-ribose(out) + ATP + H2O = D-ribose(in) + ADP + phosphate + H(+)</text>
        <dbReference type="Rhea" id="RHEA:29903"/>
        <dbReference type="ChEBI" id="CHEBI:15377"/>
        <dbReference type="ChEBI" id="CHEBI:15378"/>
        <dbReference type="ChEBI" id="CHEBI:30616"/>
        <dbReference type="ChEBI" id="CHEBI:43474"/>
        <dbReference type="ChEBI" id="CHEBI:47013"/>
        <dbReference type="ChEBI" id="CHEBI:456216"/>
        <dbReference type="EC" id="7.5.2.7"/>
    </reaction>
</comment>
<comment type="catalytic activity">
    <reaction evidence="1">
        <text>D-galactose(out) + ATP + H2O = D-galactose(in) + ADP + phosphate + H(+)</text>
        <dbReference type="Rhea" id="RHEA:60156"/>
        <dbReference type="ChEBI" id="CHEBI:4139"/>
        <dbReference type="ChEBI" id="CHEBI:15377"/>
        <dbReference type="ChEBI" id="CHEBI:15378"/>
        <dbReference type="ChEBI" id="CHEBI:30616"/>
        <dbReference type="ChEBI" id="CHEBI:43474"/>
        <dbReference type="ChEBI" id="CHEBI:456216"/>
        <dbReference type="EC" id="7.5.2.11"/>
    </reaction>
</comment>
<comment type="subcellular location">
    <subcellularLocation>
        <location evidence="1">Cell inner membrane</location>
        <topology evidence="1">Peripheral membrane protein</topology>
    </subcellularLocation>
</comment>
<comment type="similarity">
    <text evidence="1">Belongs to the ABC transporter superfamily. Carbohydrate importer 2 (CUT2) (TC 3.A.1.2) family.</text>
</comment>